<gene>
    <name evidence="1" type="primary">whiA</name>
    <name type="ordered locus">GTNG_3013</name>
</gene>
<name>WHIA_GEOTN</name>
<organism>
    <name type="scientific">Geobacillus thermodenitrificans (strain NG80-2)</name>
    <dbReference type="NCBI Taxonomy" id="420246"/>
    <lineage>
        <taxon>Bacteria</taxon>
        <taxon>Bacillati</taxon>
        <taxon>Bacillota</taxon>
        <taxon>Bacilli</taxon>
        <taxon>Bacillales</taxon>
        <taxon>Anoxybacillaceae</taxon>
        <taxon>Geobacillus</taxon>
    </lineage>
</organism>
<feature type="chain" id="PRO_0000376488" description="Probable cell division protein WhiA">
    <location>
        <begin position="1"/>
        <end position="320"/>
    </location>
</feature>
<feature type="DNA-binding region" description="H-T-H motif" evidence="1">
    <location>
        <begin position="276"/>
        <end position="310"/>
    </location>
</feature>
<reference key="1">
    <citation type="journal article" date="2007" name="Proc. Natl. Acad. Sci. U.S.A.">
        <title>Genome and proteome of long-chain alkane degrading Geobacillus thermodenitrificans NG80-2 isolated from a deep-subsurface oil reservoir.</title>
        <authorList>
            <person name="Feng L."/>
            <person name="Wang W."/>
            <person name="Cheng J."/>
            <person name="Ren Y."/>
            <person name="Zhao G."/>
            <person name="Gao C."/>
            <person name="Tang Y."/>
            <person name="Liu X."/>
            <person name="Han W."/>
            <person name="Peng X."/>
            <person name="Liu R."/>
            <person name="Wang L."/>
        </authorList>
    </citation>
    <scope>NUCLEOTIDE SEQUENCE [LARGE SCALE GENOMIC DNA]</scope>
    <source>
        <strain>NG80-2</strain>
    </source>
</reference>
<proteinExistence type="inferred from homology"/>
<keyword id="KW-0131">Cell cycle</keyword>
<keyword id="KW-0132">Cell division</keyword>
<keyword id="KW-0238">DNA-binding</keyword>
<protein>
    <recommendedName>
        <fullName evidence="1">Probable cell division protein WhiA</fullName>
    </recommendedName>
</protein>
<evidence type="ECO:0000255" key="1">
    <source>
        <dbReference type="HAMAP-Rule" id="MF_01420"/>
    </source>
</evidence>
<accession>A4ISQ4</accession>
<comment type="function">
    <text evidence="1">Involved in cell division and chromosome segregation.</text>
</comment>
<comment type="similarity">
    <text evidence="1">Belongs to the WhiA family.</text>
</comment>
<dbReference type="EMBL" id="CP000557">
    <property type="protein sequence ID" value="ABO68358.1"/>
    <property type="molecule type" value="Genomic_DNA"/>
</dbReference>
<dbReference type="RefSeq" id="WP_008880297.1">
    <property type="nucleotide sequence ID" value="NC_009328.1"/>
</dbReference>
<dbReference type="SMR" id="A4ISQ4"/>
<dbReference type="GeneID" id="87622837"/>
<dbReference type="KEGG" id="gtn:GTNG_3013"/>
<dbReference type="eggNOG" id="COG1481">
    <property type="taxonomic scope" value="Bacteria"/>
</dbReference>
<dbReference type="HOGENOM" id="CLU_053282_0_0_9"/>
<dbReference type="Proteomes" id="UP000001578">
    <property type="component" value="Chromosome"/>
</dbReference>
<dbReference type="GO" id="GO:0003677">
    <property type="term" value="F:DNA binding"/>
    <property type="evidence" value="ECO:0007669"/>
    <property type="project" value="UniProtKB-UniRule"/>
</dbReference>
<dbReference type="GO" id="GO:0051301">
    <property type="term" value="P:cell division"/>
    <property type="evidence" value="ECO:0007669"/>
    <property type="project" value="UniProtKB-UniRule"/>
</dbReference>
<dbReference type="GO" id="GO:0043937">
    <property type="term" value="P:regulation of sporulation"/>
    <property type="evidence" value="ECO:0007669"/>
    <property type="project" value="InterPro"/>
</dbReference>
<dbReference type="FunFam" id="3.10.28.10:FF:000002">
    <property type="entry name" value="Probable cell division protein WhiA"/>
    <property type="match status" value="1"/>
</dbReference>
<dbReference type="Gene3D" id="3.10.28.10">
    <property type="entry name" value="Homing endonucleases"/>
    <property type="match status" value="1"/>
</dbReference>
<dbReference type="HAMAP" id="MF_01420">
    <property type="entry name" value="HTH_type_WhiA"/>
    <property type="match status" value="1"/>
</dbReference>
<dbReference type="InterPro" id="IPR027434">
    <property type="entry name" value="Homing_endonucl"/>
</dbReference>
<dbReference type="InterPro" id="IPR018478">
    <property type="entry name" value="Sporu_reg_WhiA_N_dom"/>
</dbReference>
<dbReference type="InterPro" id="IPR003802">
    <property type="entry name" value="Sporulation_regulator_WhiA"/>
</dbReference>
<dbReference type="InterPro" id="IPR023054">
    <property type="entry name" value="Sporulation_regulator_WhiA_C"/>
</dbReference>
<dbReference type="InterPro" id="IPR039518">
    <property type="entry name" value="WhiA_LAGLIDADG_dom"/>
</dbReference>
<dbReference type="NCBIfam" id="TIGR00647">
    <property type="entry name" value="DNA_bind_WhiA"/>
    <property type="match status" value="1"/>
</dbReference>
<dbReference type="PANTHER" id="PTHR37307">
    <property type="entry name" value="CELL DIVISION PROTEIN WHIA-RELATED"/>
    <property type="match status" value="1"/>
</dbReference>
<dbReference type="PANTHER" id="PTHR37307:SF1">
    <property type="entry name" value="CELL DIVISION PROTEIN WHIA-RELATED"/>
    <property type="match status" value="1"/>
</dbReference>
<dbReference type="Pfam" id="PF02650">
    <property type="entry name" value="HTH_WhiA"/>
    <property type="match status" value="1"/>
</dbReference>
<dbReference type="Pfam" id="PF14527">
    <property type="entry name" value="LAGLIDADG_WhiA"/>
    <property type="match status" value="1"/>
</dbReference>
<dbReference type="Pfam" id="PF10298">
    <property type="entry name" value="WhiA_N"/>
    <property type="match status" value="1"/>
</dbReference>
<dbReference type="SUPFAM" id="SSF55608">
    <property type="entry name" value="Homing endonucleases"/>
    <property type="match status" value="1"/>
</dbReference>
<sequence length="320" mass="36564">MSFASETKKELTNLEVKHCCLRAELSALLRMNGSLSFSGGRMTVDVQTENAAIARRIYMLLRKGYDVAVELFVRKKMRLKKNNVYIVRITDGAASLLRELYIWNGDFSFVHDISPELIKKKCCKRSYLRGAFLAGGSVNNPETSSYHLEIFSLYEEHNRSLCELMNSHFFLNAKTLERKKGFITYLKEAEKIAEFLNIIGAHQALLRFEDIRIVRDMRNSVNRLVNCETANLNKTIGAALRQVENIRYIDETIGLDSLPAKLREIAKLRIEHQDVTLKELGEMVAGGKISKSGINHRLRKIDEIAERLRAGKPVDFHKSL</sequence>